<comment type="function">
    <text evidence="1">Protease with a carboxypeptidase B-like function involved in the C-terminal processing of the lysine and arginine residues from protein precursors. Promotes cell fusion and is involved in the programmed cell death (By similarity).</text>
</comment>
<comment type="catalytic activity">
    <reaction>
        <text>Preferential release of a C-terminal arginine or lysine residue.</text>
        <dbReference type="EC" id="3.4.16.6"/>
    </reaction>
</comment>
<comment type="subcellular location">
    <subcellularLocation>
        <location evidence="1">Golgi apparatus</location>
        <location evidence="1">trans-Golgi network membrane</location>
        <topology evidence="1">Single-pass type I membrane protein</topology>
    </subcellularLocation>
</comment>
<comment type="similarity">
    <text evidence="5">Belongs to the peptidase S10 family.</text>
</comment>
<reference key="1">
    <citation type="journal article" date="2009" name="Genome Res.">
        <title>Comparative genomics of the fungal pathogens Candida dubliniensis and Candida albicans.</title>
        <authorList>
            <person name="Jackson A.P."/>
            <person name="Gamble J.A."/>
            <person name="Yeomans T."/>
            <person name="Moran G.P."/>
            <person name="Saunders D."/>
            <person name="Harris D."/>
            <person name="Aslett M."/>
            <person name="Barrell J.F."/>
            <person name="Butler G."/>
            <person name="Citiulo F."/>
            <person name="Coleman D.C."/>
            <person name="de Groot P.W.J."/>
            <person name="Goodwin T.J."/>
            <person name="Quail M.A."/>
            <person name="McQuillan J."/>
            <person name="Munro C.A."/>
            <person name="Pain A."/>
            <person name="Poulter R.T."/>
            <person name="Rajandream M.A."/>
            <person name="Renauld H."/>
            <person name="Spiering M.J."/>
            <person name="Tivey A."/>
            <person name="Gow N.A.R."/>
            <person name="Barrell B."/>
            <person name="Sullivan D.J."/>
            <person name="Berriman M."/>
        </authorList>
    </citation>
    <scope>NUCLEOTIDE SEQUENCE [LARGE SCALE GENOMIC DNA]</scope>
    <source>
        <strain>CD36 / ATCC MYA-646 / CBS 7987 / NCPF 3949 / NRRL Y-17841</strain>
    </source>
</reference>
<gene>
    <name type="primary">KEX1</name>
    <name type="ORF">CD36_70870</name>
</gene>
<accession>B9WJJ7</accession>
<name>KEX1_CANDC</name>
<feature type="signal peptide" evidence="2">
    <location>
        <begin position="1"/>
        <end position="19"/>
    </location>
</feature>
<feature type="chain" id="PRO_0000411909" description="Pheromone-processing carboxypeptidase KEX1">
    <location>
        <begin position="20"/>
        <end position="686"/>
    </location>
</feature>
<feature type="topological domain" description="Lumenal" evidence="2">
    <location>
        <begin position="20"/>
        <end position="543"/>
    </location>
</feature>
<feature type="transmembrane region" description="Helical" evidence="2">
    <location>
        <begin position="544"/>
        <end position="564"/>
    </location>
</feature>
<feature type="topological domain" description="Cytoplasmic" evidence="2">
    <location>
        <begin position="565"/>
        <end position="686"/>
    </location>
</feature>
<feature type="region of interest" description="Disordered" evidence="4">
    <location>
        <begin position="489"/>
        <end position="519"/>
    </location>
</feature>
<feature type="region of interest" description="Disordered" evidence="4">
    <location>
        <begin position="570"/>
        <end position="590"/>
    </location>
</feature>
<feature type="region of interest" description="Disordered" evidence="4">
    <location>
        <begin position="627"/>
        <end position="686"/>
    </location>
</feature>
<feature type="compositionally biased region" description="Basic and acidic residues" evidence="4">
    <location>
        <begin position="491"/>
        <end position="500"/>
    </location>
</feature>
<feature type="compositionally biased region" description="Low complexity" evidence="4">
    <location>
        <begin position="504"/>
        <end position="519"/>
    </location>
</feature>
<feature type="compositionally biased region" description="Low complexity" evidence="4">
    <location>
        <begin position="576"/>
        <end position="586"/>
    </location>
</feature>
<feature type="compositionally biased region" description="Basic and acidic residues" evidence="4">
    <location>
        <begin position="627"/>
        <end position="641"/>
    </location>
</feature>
<feature type="compositionally biased region" description="Basic and acidic residues" evidence="4">
    <location>
        <begin position="674"/>
        <end position="686"/>
    </location>
</feature>
<feature type="active site" evidence="3">
    <location>
        <position position="184"/>
    </location>
</feature>
<feature type="active site" evidence="3">
    <location>
        <position position="394"/>
    </location>
</feature>
<feature type="active site" evidence="3">
    <location>
        <position position="452"/>
    </location>
</feature>
<feature type="glycosylation site" description="N-linked (GlcNAc...) asparagine" evidence="2">
    <location>
        <position position="85"/>
    </location>
</feature>
<feature type="glycosylation site" description="N-linked (GlcNAc...) asparagine" evidence="2">
    <location>
        <position position="122"/>
    </location>
</feature>
<feature type="glycosylation site" description="N-linked (GlcNAc...) asparagine" evidence="2">
    <location>
        <position position="441"/>
    </location>
</feature>
<feature type="glycosylation site" description="N-linked (GlcNAc...) asparagine" evidence="2">
    <location>
        <position position="449"/>
    </location>
</feature>
<organism>
    <name type="scientific">Candida dubliniensis (strain CD36 / ATCC MYA-646 / CBS 7987 / NCPF 3949 / NRRL Y-17841)</name>
    <name type="common">Yeast</name>
    <dbReference type="NCBI Taxonomy" id="573826"/>
    <lineage>
        <taxon>Eukaryota</taxon>
        <taxon>Fungi</taxon>
        <taxon>Dikarya</taxon>
        <taxon>Ascomycota</taxon>
        <taxon>Saccharomycotina</taxon>
        <taxon>Pichiomycetes</taxon>
        <taxon>Debaryomycetaceae</taxon>
        <taxon>Candida/Lodderomyces clade</taxon>
        <taxon>Candida</taxon>
    </lineage>
</organism>
<protein>
    <recommendedName>
        <fullName>Pheromone-processing carboxypeptidase KEX1</fullName>
        <ecNumber>3.4.16.6</ecNumber>
    </recommendedName>
    <alternativeName>
        <fullName>Carboxypeptidase D</fullName>
    </alternativeName>
</protein>
<evidence type="ECO:0000250" key="1"/>
<evidence type="ECO:0000255" key="2"/>
<evidence type="ECO:0000255" key="3">
    <source>
        <dbReference type="PROSITE-ProRule" id="PRU10075"/>
    </source>
</evidence>
<evidence type="ECO:0000256" key="4">
    <source>
        <dbReference type="SAM" id="MobiDB-lite"/>
    </source>
</evidence>
<evidence type="ECO:0000305" key="5"/>
<dbReference type="EC" id="3.4.16.6"/>
<dbReference type="EMBL" id="FM992694">
    <property type="protein sequence ID" value="CAX40641.1"/>
    <property type="molecule type" value="Genomic_DNA"/>
</dbReference>
<dbReference type="RefSeq" id="XP_002421307.1">
    <property type="nucleotide sequence ID" value="XM_002421262.1"/>
</dbReference>
<dbReference type="SMR" id="B9WJJ7"/>
<dbReference type="ESTHER" id="candc-kex1">
    <property type="family name" value="Carboxypeptidase_S10"/>
</dbReference>
<dbReference type="MEROPS" id="S10.007"/>
<dbReference type="GlyCosmos" id="B9WJJ7">
    <property type="glycosylation" value="4 sites, No reported glycans"/>
</dbReference>
<dbReference type="GeneID" id="8049274"/>
<dbReference type="KEGG" id="cdu:CD36_70870"/>
<dbReference type="CGD" id="CAL0000171205">
    <property type="gene designation" value="Cd36_70870"/>
</dbReference>
<dbReference type="eggNOG" id="KOG1282">
    <property type="taxonomic scope" value="Eukaryota"/>
</dbReference>
<dbReference type="HOGENOM" id="CLU_008523_11_2_1"/>
<dbReference type="OrthoDB" id="443318at2759"/>
<dbReference type="Proteomes" id="UP000002605">
    <property type="component" value="Chromosome 7"/>
</dbReference>
<dbReference type="GO" id="GO:0016020">
    <property type="term" value="C:membrane"/>
    <property type="evidence" value="ECO:0007669"/>
    <property type="project" value="UniProtKB-KW"/>
</dbReference>
<dbReference type="GO" id="GO:0005802">
    <property type="term" value="C:trans-Golgi network"/>
    <property type="evidence" value="ECO:0007669"/>
    <property type="project" value="TreeGrafter"/>
</dbReference>
<dbReference type="GO" id="GO:0004185">
    <property type="term" value="F:serine-type carboxypeptidase activity"/>
    <property type="evidence" value="ECO:0007669"/>
    <property type="project" value="UniProtKB-EC"/>
</dbReference>
<dbReference type="GO" id="GO:0006915">
    <property type="term" value="P:apoptotic process"/>
    <property type="evidence" value="ECO:0007669"/>
    <property type="project" value="UniProtKB-KW"/>
</dbReference>
<dbReference type="GO" id="GO:0006508">
    <property type="term" value="P:proteolysis"/>
    <property type="evidence" value="ECO:0007669"/>
    <property type="project" value="UniProtKB-KW"/>
</dbReference>
<dbReference type="FunFam" id="3.40.50.1820:FF:000289">
    <property type="entry name" value="Pheromone-processing carboxypeptidase KEX1"/>
    <property type="match status" value="1"/>
</dbReference>
<dbReference type="Gene3D" id="3.40.50.1820">
    <property type="entry name" value="alpha/beta hydrolase"/>
    <property type="match status" value="1"/>
</dbReference>
<dbReference type="InterPro" id="IPR029058">
    <property type="entry name" value="AB_hydrolase_fold"/>
</dbReference>
<dbReference type="InterPro" id="IPR001563">
    <property type="entry name" value="Peptidase_S10"/>
</dbReference>
<dbReference type="InterPro" id="IPR033124">
    <property type="entry name" value="Ser_caboxypep_his_AS"/>
</dbReference>
<dbReference type="PANTHER" id="PTHR11802:SF190">
    <property type="entry name" value="PHEROMONE-PROCESSING CARBOXYPEPTIDASE KEX1"/>
    <property type="match status" value="1"/>
</dbReference>
<dbReference type="PANTHER" id="PTHR11802">
    <property type="entry name" value="SERINE PROTEASE FAMILY S10 SERINE CARBOXYPEPTIDASE"/>
    <property type="match status" value="1"/>
</dbReference>
<dbReference type="Pfam" id="PF00450">
    <property type="entry name" value="Peptidase_S10"/>
    <property type="match status" value="1"/>
</dbReference>
<dbReference type="PRINTS" id="PR00724">
    <property type="entry name" value="CRBOXYPTASEC"/>
</dbReference>
<dbReference type="SUPFAM" id="SSF53474">
    <property type="entry name" value="alpha/beta-Hydrolases"/>
    <property type="match status" value="1"/>
</dbReference>
<dbReference type="PROSITE" id="PS00560">
    <property type="entry name" value="CARBOXYPEPT_SER_HIS"/>
    <property type="match status" value="1"/>
</dbReference>
<proteinExistence type="inferred from homology"/>
<keyword id="KW-0053">Apoptosis</keyword>
<keyword id="KW-0121">Carboxypeptidase</keyword>
<keyword id="KW-0325">Glycoprotein</keyword>
<keyword id="KW-0333">Golgi apparatus</keyword>
<keyword id="KW-0378">Hydrolase</keyword>
<keyword id="KW-0472">Membrane</keyword>
<keyword id="KW-0645">Protease</keyword>
<keyword id="KW-0732">Signal</keyword>
<keyword id="KW-0812">Transmembrane</keyword>
<keyword id="KW-1133">Transmembrane helix</keyword>
<sequence length="686" mass="77574">MKFLLPTFIIFIYTLLVSALPTKEGSDPKAAKKYLVSDLPGLHDNITPDDSIPLMFAGQLEIYPESNTHYFFWKFSDSNQETITNRTIFWLNGGPGCSSMDGALLETGPFRINSQQQVISNNGSWHKSGDIIYVDQPAGTGFSYSDTYITDLDQVANYFLKFMEAYYELFPQEINNEIYFAGESYAGQYIPYIANAILQRNKKLHEGEQKYDLRGVLIGNGWVSPNEQSLSYLPFFKDHGLIDIHHPKWATLLAKHEQCQKIVNKIDSTFDDGTVHYYEVSSSTCEAILTDLLEYTQDTANDKNQQCINMYDYTLRDSYPSCGMNWPNELVNVGPFLRQEKVMHQLNLINLKKWNECNGKVGRTFQARHSIPSVHLLPELAKEIPVMLFNGANDIICNSQGVLSYLQKLQWNGETGFINKDNQISWVYDNKEVGYMLWERNISFINIYNSSHMVPYDLPDVSRALIDLITGEYDEKDVDGKKSFVTYPLGSRKENDESKNPVESPSQTIDPIISSSSSSVESSLSSSSASATDSDSTSSKFTRLIQLAVILVIFWGVYVLYASYKSRPSSIIKKPTNNTSNITRSSTGKKKNVQWADQLNQFEDDERNQESNQGIIAKAIGKITGSKDTRGRYAPVHRENDNEYIDDIELGEGISDPNVDEFIIGSDDDDEEEQPRSDPATHKSVS</sequence>